<organism>
    <name type="scientific">Rattus norvegicus</name>
    <name type="common">Rat</name>
    <dbReference type="NCBI Taxonomy" id="10116"/>
    <lineage>
        <taxon>Eukaryota</taxon>
        <taxon>Metazoa</taxon>
        <taxon>Chordata</taxon>
        <taxon>Craniata</taxon>
        <taxon>Vertebrata</taxon>
        <taxon>Euteleostomi</taxon>
        <taxon>Mammalia</taxon>
        <taxon>Eutheria</taxon>
        <taxon>Euarchontoglires</taxon>
        <taxon>Glires</taxon>
        <taxon>Rodentia</taxon>
        <taxon>Myomorpha</taxon>
        <taxon>Muroidea</taxon>
        <taxon>Muridae</taxon>
        <taxon>Murinae</taxon>
        <taxon>Rattus</taxon>
    </lineage>
</organism>
<feature type="signal peptide" evidence="4">
    <location>
        <begin position="1"/>
        <end position="21"/>
    </location>
</feature>
<feature type="propeptide" id="PRO_0000004381" description="Activation peptide" evidence="1">
    <location>
        <begin position="22"/>
        <end position="113"/>
    </location>
</feature>
<feature type="chain" id="PRO_0000004382" description="Carboxypeptidase B2">
    <location>
        <begin position="114"/>
        <end position="422"/>
    </location>
</feature>
<feature type="domain" description="Peptidase M14" evidence="5">
    <location>
        <begin position="121"/>
        <end position="418"/>
    </location>
</feature>
<feature type="active site" description="Proton donor/acceptor" evidence="5">
    <location>
        <position position="384"/>
    </location>
</feature>
<feature type="binding site" evidence="2">
    <location>
        <begin position="180"/>
        <end position="183"/>
    </location>
    <ligand>
        <name>substrate</name>
    </ligand>
</feature>
<feature type="binding site" evidence="5">
    <location>
        <position position="180"/>
    </location>
    <ligand>
        <name>Zn(2+)</name>
        <dbReference type="ChEBI" id="CHEBI:29105"/>
        <note>catalytic</note>
    </ligand>
</feature>
<feature type="binding site" evidence="5">
    <location>
        <position position="183"/>
    </location>
    <ligand>
        <name>Zn(2+)</name>
        <dbReference type="ChEBI" id="CHEBI:29105"/>
        <note>catalytic</note>
    </ligand>
</feature>
<feature type="binding site" evidence="2">
    <location>
        <position position="238"/>
    </location>
    <ligand>
        <name>substrate</name>
    </ligand>
</feature>
<feature type="binding site" evidence="2">
    <location>
        <begin position="255"/>
        <end position="256"/>
    </location>
    <ligand>
        <name>substrate</name>
    </ligand>
</feature>
<feature type="binding site" evidence="5">
    <location>
        <position position="309"/>
    </location>
    <ligand>
        <name>Zn(2+)</name>
        <dbReference type="ChEBI" id="CHEBI:29105"/>
        <note>catalytic</note>
    </ligand>
</feature>
<feature type="binding site" evidence="2">
    <location>
        <begin position="310"/>
        <end position="311"/>
    </location>
    <ligand>
        <name>substrate</name>
    </ligand>
</feature>
<feature type="binding site" evidence="2">
    <location>
        <position position="362"/>
    </location>
    <ligand>
        <name>substrate</name>
    </ligand>
</feature>
<feature type="site" description="Cleavage; by thrombin" evidence="1">
    <location>
        <begin position="323"/>
        <end position="324"/>
    </location>
</feature>
<feature type="glycosylation site" description="N-linked (GlcNAc...) asparagine" evidence="4">
    <location>
        <position position="43"/>
    </location>
</feature>
<feature type="glycosylation site" description="N-linked (GlcNAc...) asparagine" evidence="4">
    <location>
        <position position="72"/>
    </location>
</feature>
<feature type="glycosylation site" description="N-linked (GlcNAc...) asparagine" evidence="4">
    <location>
        <position position="84"/>
    </location>
</feature>
<feature type="glycosylation site" description="N-linked (GlcNAc...) asparagine" evidence="4">
    <location>
        <position position="107"/>
    </location>
</feature>
<feature type="glycosylation site" description="N-linked (GlcNAc...) asparagine" evidence="4">
    <location>
        <position position="240"/>
    </location>
</feature>
<feature type="glycosylation site" description="N-linked (GlcNAc...) asparagine" evidence="4">
    <location>
        <position position="322"/>
    </location>
</feature>
<feature type="disulfide bond" evidence="3">
    <location>
        <begin position="177"/>
        <end position="190"/>
    </location>
</feature>
<feature type="disulfide bond" evidence="3">
    <location>
        <begin position="249"/>
        <end position="273"/>
    </location>
</feature>
<feature type="disulfide bond" evidence="3">
    <location>
        <begin position="264"/>
        <end position="278"/>
    </location>
</feature>
<sequence>MKLYGLGVLVAIILYEKHGLAFQSGHVLSALPRTSRQVQLLQNLTTTYEVVLWQPVTAEFIEKKKEVHFFVNASDVNSVKAYLNASRIPFNVLMNNVEDLIQQQTSNDTVSPRASSSYYEQYHSLNEIYSWIEVITEQHPDMLQKIYIGSSYEKYPLYVLKVSGKEHRVKNAIWIDCGIHAREWISPAFCLWFIGYVTQFHGKENTYTRLLRHVDFYIMPVMNVDGYDYTWKKNRMWRKNRSVHMNNRCVGTDLNRNFASKHWCEKGASSFSCSETYCGLYPESEPEVKAVADFLRRNINHIKAYISMHSYSQQILFPYSYNRSKSKDHEELSLVASEAVRAIESINKNTRYTHGSGSESLYLAPGGSDDWIYDLGIKYSFTIELRDTGRYGFLLPERFIKPTCAEALAAVSKIAWHVIRNS</sequence>
<evidence type="ECO:0000250" key="1"/>
<evidence type="ECO:0000250" key="2">
    <source>
        <dbReference type="UniProtKB" id="P00730"/>
    </source>
</evidence>
<evidence type="ECO:0000250" key="3">
    <source>
        <dbReference type="UniProtKB" id="Q96IY4"/>
    </source>
</evidence>
<evidence type="ECO:0000255" key="4"/>
<evidence type="ECO:0000255" key="5">
    <source>
        <dbReference type="PROSITE-ProRule" id="PRU01379"/>
    </source>
</evidence>
<evidence type="ECO:0000269" key="6">
    <source>
    </source>
</evidence>
<evidence type="ECO:0000305" key="7"/>
<name>CBPB2_RAT</name>
<proteinExistence type="evidence at transcript level"/>
<reference key="1">
    <citation type="journal article" date="2000" name="Microbiol. Immunol.">
        <title>Molecular cloning and partial characterization of rat procarboxypeptidase R and carboxypeptidase N.</title>
        <authorList>
            <person name="Kato T."/>
            <person name="Sato T."/>
            <person name="Matsuo S."/>
            <person name="Yamamoto T."/>
            <person name="Campbell W."/>
            <person name="Hotta N."/>
            <person name="Okada N."/>
            <person name="Okada H."/>
        </authorList>
    </citation>
    <scope>NUCLEOTIDE SEQUENCE [MRNA]</scope>
    <scope>FUNCTION</scope>
</reference>
<reference key="2">
    <citation type="journal article" date="2004" name="Genome Res.">
        <title>The status, quality, and expansion of the NIH full-length cDNA project: the Mammalian Gene Collection (MGC).</title>
        <authorList>
            <consortium name="The MGC Project Team"/>
        </authorList>
    </citation>
    <scope>NUCLEOTIDE SEQUENCE [LARGE SCALE MRNA]</scope>
    <source>
        <tissue>Liver</tissue>
    </source>
</reference>
<dbReference type="EC" id="3.4.17.20"/>
<dbReference type="EMBL" id="AB042598">
    <property type="protein sequence ID" value="BAB18617.1"/>
    <property type="molecule type" value="mRNA"/>
</dbReference>
<dbReference type="EMBL" id="BC091133">
    <property type="protein sequence ID" value="AAH91133.1"/>
    <property type="molecule type" value="mRNA"/>
</dbReference>
<dbReference type="EMBL" id="BC107447">
    <property type="protein sequence ID" value="AAI07448.1"/>
    <property type="molecule type" value="mRNA"/>
</dbReference>
<dbReference type="RefSeq" id="NP_446069.1">
    <property type="nucleotide sequence ID" value="NM_053617.2"/>
</dbReference>
<dbReference type="SMR" id="Q9EQV9"/>
<dbReference type="FunCoup" id="Q9EQV9">
    <property type="interactions" value="111"/>
</dbReference>
<dbReference type="STRING" id="10116.ENSRNOP00000014909"/>
<dbReference type="BindingDB" id="Q9EQV9"/>
<dbReference type="ChEMBL" id="CHEMBL4879512"/>
<dbReference type="MEROPS" id="M14.009"/>
<dbReference type="GlyCosmos" id="Q9EQV9">
    <property type="glycosylation" value="6 sites, No reported glycans"/>
</dbReference>
<dbReference type="GlyGen" id="Q9EQV9">
    <property type="glycosylation" value="6 sites"/>
</dbReference>
<dbReference type="PhosphoSitePlus" id="Q9EQV9"/>
<dbReference type="PaxDb" id="10116-ENSRNOP00000014909"/>
<dbReference type="Ensembl" id="ENSRNOT00000014909.8">
    <property type="protein sequence ID" value="ENSRNOP00000014909.4"/>
    <property type="gene ID" value="ENSRNOG00000010935.8"/>
</dbReference>
<dbReference type="GeneID" id="113936"/>
<dbReference type="KEGG" id="rno:113936"/>
<dbReference type="UCSC" id="RGD:71035">
    <property type="organism name" value="rat"/>
</dbReference>
<dbReference type="AGR" id="RGD:71035"/>
<dbReference type="CTD" id="1361"/>
<dbReference type="RGD" id="71035">
    <property type="gene designation" value="Cpb2"/>
</dbReference>
<dbReference type="eggNOG" id="KOG2650">
    <property type="taxonomic scope" value="Eukaryota"/>
</dbReference>
<dbReference type="GeneTree" id="ENSGT00940000159160"/>
<dbReference type="HOGENOM" id="CLU_019326_0_0_1"/>
<dbReference type="InParanoid" id="Q9EQV9"/>
<dbReference type="OMA" id="IGHITEY"/>
<dbReference type="OrthoDB" id="3626597at2759"/>
<dbReference type="PhylomeDB" id="Q9EQV9"/>
<dbReference type="TreeFam" id="TF317197"/>
<dbReference type="BRENDA" id="3.4.17.20">
    <property type="organism ID" value="5301"/>
</dbReference>
<dbReference type="Reactome" id="R-RNO-2022377">
    <property type="pathway name" value="Metabolism of Angiotensinogen to Angiotensins"/>
</dbReference>
<dbReference type="Reactome" id="R-RNO-977606">
    <property type="pathway name" value="Regulation of Complement cascade"/>
</dbReference>
<dbReference type="PRO" id="PR:Q9EQV9"/>
<dbReference type="Proteomes" id="UP000002494">
    <property type="component" value="Chromosome 15"/>
</dbReference>
<dbReference type="Bgee" id="ENSRNOG00000010935">
    <property type="expression patterns" value="Expressed in liver and 12 other cell types or tissues"/>
</dbReference>
<dbReference type="GO" id="GO:0005615">
    <property type="term" value="C:extracellular space"/>
    <property type="evidence" value="ECO:0000314"/>
    <property type="project" value="RGD"/>
</dbReference>
<dbReference type="GO" id="GO:0004180">
    <property type="term" value="F:carboxypeptidase activity"/>
    <property type="evidence" value="ECO:0000314"/>
    <property type="project" value="RGD"/>
</dbReference>
<dbReference type="GO" id="GO:0004181">
    <property type="term" value="F:metallocarboxypeptidase activity"/>
    <property type="evidence" value="ECO:0000318"/>
    <property type="project" value="GO_Central"/>
</dbReference>
<dbReference type="GO" id="GO:0008270">
    <property type="term" value="F:zinc ion binding"/>
    <property type="evidence" value="ECO:0007669"/>
    <property type="project" value="InterPro"/>
</dbReference>
<dbReference type="GO" id="GO:0007596">
    <property type="term" value="P:blood coagulation"/>
    <property type="evidence" value="ECO:0007669"/>
    <property type="project" value="UniProtKB-KW"/>
</dbReference>
<dbReference type="GO" id="GO:0071333">
    <property type="term" value="P:cellular response to glucose stimulus"/>
    <property type="evidence" value="ECO:0000270"/>
    <property type="project" value="RGD"/>
</dbReference>
<dbReference type="GO" id="GO:0042730">
    <property type="term" value="P:fibrinolysis"/>
    <property type="evidence" value="ECO:0000315"/>
    <property type="project" value="RGD"/>
</dbReference>
<dbReference type="GO" id="GO:0097421">
    <property type="term" value="P:liver regeneration"/>
    <property type="evidence" value="ECO:0000270"/>
    <property type="project" value="RGD"/>
</dbReference>
<dbReference type="GO" id="GO:0051918">
    <property type="term" value="P:negative regulation of fibrinolysis"/>
    <property type="evidence" value="ECO:0000314"/>
    <property type="project" value="RGD"/>
</dbReference>
<dbReference type="GO" id="GO:2000346">
    <property type="term" value="P:negative regulation of hepatocyte proliferation"/>
    <property type="evidence" value="ECO:0000315"/>
    <property type="project" value="RGD"/>
</dbReference>
<dbReference type="GO" id="GO:0010757">
    <property type="term" value="P:negative regulation of plasminogen activation"/>
    <property type="evidence" value="ECO:0000315"/>
    <property type="project" value="RGD"/>
</dbReference>
<dbReference type="GO" id="GO:0003331">
    <property type="term" value="P:positive regulation of extracellular matrix constituent secretion"/>
    <property type="evidence" value="ECO:0000315"/>
    <property type="project" value="RGD"/>
</dbReference>
<dbReference type="GO" id="GO:0030163">
    <property type="term" value="P:protein catabolic process"/>
    <property type="evidence" value="ECO:0000314"/>
    <property type="project" value="RGD"/>
</dbReference>
<dbReference type="GO" id="GO:0006508">
    <property type="term" value="P:proteolysis"/>
    <property type="evidence" value="ECO:0000318"/>
    <property type="project" value="GO_Central"/>
</dbReference>
<dbReference type="GO" id="GO:0009410">
    <property type="term" value="P:response to xenobiotic stimulus"/>
    <property type="evidence" value="ECO:0000270"/>
    <property type="project" value="RGD"/>
</dbReference>
<dbReference type="CDD" id="cd06246">
    <property type="entry name" value="M14_CPB2"/>
    <property type="match status" value="1"/>
</dbReference>
<dbReference type="FunFam" id="3.30.70.340:FF:000003">
    <property type="entry name" value="Carboxypeptidase B2"/>
    <property type="match status" value="1"/>
</dbReference>
<dbReference type="FunFam" id="3.40.630.10:FF:000084">
    <property type="entry name" value="Carboxypeptidase B2"/>
    <property type="match status" value="1"/>
</dbReference>
<dbReference type="Gene3D" id="3.30.70.340">
    <property type="entry name" value="Metallocarboxypeptidase-like"/>
    <property type="match status" value="1"/>
</dbReference>
<dbReference type="Gene3D" id="3.40.630.10">
    <property type="entry name" value="Zn peptidases"/>
    <property type="match status" value="1"/>
</dbReference>
<dbReference type="InterPro" id="IPR033849">
    <property type="entry name" value="CPB2"/>
</dbReference>
<dbReference type="InterPro" id="IPR036990">
    <property type="entry name" value="M14A-like_propep"/>
</dbReference>
<dbReference type="InterPro" id="IPR003146">
    <property type="entry name" value="M14A_act_pep"/>
</dbReference>
<dbReference type="InterPro" id="IPR000834">
    <property type="entry name" value="Peptidase_M14"/>
</dbReference>
<dbReference type="PANTHER" id="PTHR11705:SF17">
    <property type="entry name" value="CARBOXYPEPTIDASE B2"/>
    <property type="match status" value="1"/>
</dbReference>
<dbReference type="PANTHER" id="PTHR11705">
    <property type="entry name" value="PROTEASE FAMILY M14 CARBOXYPEPTIDASE A,B"/>
    <property type="match status" value="1"/>
</dbReference>
<dbReference type="Pfam" id="PF00246">
    <property type="entry name" value="Peptidase_M14"/>
    <property type="match status" value="1"/>
</dbReference>
<dbReference type="Pfam" id="PF02244">
    <property type="entry name" value="Propep_M14"/>
    <property type="match status" value="1"/>
</dbReference>
<dbReference type="PRINTS" id="PR00765">
    <property type="entry name" value="CRBOXYPTASEA"/>
</dbReference>
<dbReference type="SMART" id="SM00631">
    <property type="entry name" value="Zn_pept"/>
    <property type="match status" value="1"/>
</dbReference>
<dbReference type="SUPFAM" id="SSF54897">
    <property type="entry name" value="Protease propeptides/inhibitors"/>
    <property type="match status" value="1"/>
</dbReference>
<dbReference type="SUPFAM" id="SSF53187">
    <property type="entry name" value="Zn-dependent exopeptidases"/>
    <property type="match status" value="1"/>
</dbReference>
<dbReference type="PROSITE" id="PS52035">
    <property type="entry name" value="PEPTIDASE_M14"/>
    <property type="match status" value="1"/>
</dbReference>
<keyword id="KW-0094">Blood coagulation</keyword>
<keyword id="KW-0121">Carboxypeptidase</keyword>
<keyword id="KW-1015">Disulfide bond</keyword>
<keyword id="KW-0280">Fibrinolysis</keyword>
<keyword id="KW-0325">Glycoprotein</keyword>
<keyword id="KW-0356">Hemostasis</keyword>
<keyword id="KW-0378">Hydrolase</keyword>
<keyword id="KW-0479">Metal-binding</keyword>
<keyword id="KW-0482">Metalloprotease</keyword>
<keyword id="KW-0645">Protease</keyword>
<keyword id="KW-1185">Reference proteome</keyword>
<keyword id="KW-0964">Secreted</keyword>
<keyword id="KW-0732">Signal</keyword>
<keyword id="KW-0862">Zinc</keyword>
<keyword id="KW-0865">Zymogen</keyword>
<protein>
    <recommendedName>
        <fullName>Carboxypeptidase B2</fullName>
        <ecNumber>3.4.17.20</ecNumber>
    </recommendedName>
    <alternativeName>
        <fullName>Carboxypeptidase R</fullName>
        <shortName>CPR</shortName>
    </alternativeName>
    <alternativeName>
        <fullName>Carboxypeptidase U</fullName>
        <shortName>CPU</shortName>
    </alternativeName>
    <alternativeName>
        <fullName>Thrombin-activable fibrinolysis inhibitor</fullName>
        <shortName>TAFI</shortName>
    </alternativeName>
</protein>
<accession>Q9EQV9</accession>
<accession>Q3B7V3</accession>
<accession>Q5BKB8</accession>
<comment type="function">
    <text evidence="6">Cleaves C-terminal arginine or lysine residues from biologically active peptides such as kinins or anaphylatoxins in the circulation thereby regulating their activities. Down-regulates fibrinolysis by removing C-terminal lysine residues from fibrin that has already been partially degraded by plasmin.</text>
</comment>
<comment type="catalytic activity">
    <reaction>
        <text>Release of C-terminal Arg and Lys from a polypeptide.</text>
        <dbReference type="EC" id="3.4.17.20"/>
    </reaction>
</comment>
<comment type="cofactor">
    <cofactor evidence="2">
        <name>Zn(2+)</name>
        <dbReference type="ChEBI" id="CHEBI:29105"/>
    </cofactor>
    <text evidence="2">Binds 1 zinc ion per subunit.</text>
</comment>
<comment type="activity regulation">
    <text evidence="1">TAFI/CPB2 is unique among carboxypeptidases in that it spontaneously inactivates with a short half-life, a property that is crucial for its role in controlling blood clot lysis. The zymogen is stabilized by interactions with the activation peptide. Release of the activation peptide increases a dynamic flap mobility and in time this leads to conformational changes that disrupt the catalytic site and expose a cryptic thrombin-cleavage site present at Arg-323 (By similarity).</text>
</comment>
<comment type="subcellular location">
    <subcellularLocation>
        <location>Secreted</location>
    </subcellularLocation>
</comment>
<comment type="tissue specificity">
    <text>Plasma; synthesized in the liver.</text>
</comment>
<comment type="similarity">
    <text evidence="7">Belongs to the peptidase M14 family.</text>
</comment>
<gene>
    <name type="primary">Cpb2</name>
</gene>